<accession>Q58815</accession>
<proteinExistence type="inferred from homology"/>
<name>GLMS_METJA</name>
<evidence type="ECO:0000250" key="1"/>
<evidence type="ECO:0000255" key="2"/>
<evidence type="ECO:0000255" key="3">
    <source>
        <dbReference type="PROSITE-ProRule" id="PRU00257"/>
    </source>
</evidence>
<evidence type="ECO:0000255" key="4">
    <source>
        <dbReference type="PROSITE-ProRule" id="PRU00273"/>
    </source>
</evidence>
<evidence type="ECO:0000255" key="5">
    <source>
        <dbReference type="PROSITE-ProRule" id="PRU00609"/>
    </source>
</evidence>
<evidence type="ECO:0000255" key="6">
    <source>
        <dbReference type="PROSITE-ProRule" id="PRU00797"/>
    </source>
</evidence>
<evidence type="ECO:0000305" key="7"/>
<feature type="initiator methionine" description="Removed" evidence="1">
    <location>
        <position position="1"/>
    </location>
</feature>
<feature type="chain" id="PRO_0000010848" description="Glutamine--fructose-6-phosphate aminotransferase [isomerizing], 1st part" evidence="2">
    <location>
        <begin position="2"/>
        <end position="71"/>
    </location>
</feature>
<feature type="chain" id="PRO_0000010849" description="Mja gf6p intein" evidence="2">
    <location>
        <begin position="72"/>
        <end position="570"/>
    </location>
</feature>
<feature type="chain" id="PRO_0000010850" description="Glutamine--fructose-6-phosphate aminotransferase [isomerizing], 2nd part" evidence="2">
    <location>
        <begin position="571"/>
        <end position="1099"/>
    </location>
</feature>
<feature type="domain" description="Glutamine amidotransferase type-2; first part" evidence="5">
    <location>
        <begin position="2"/>
        <end position="71"/>
    </location>
</feature>
<feature type="domain" description="HTH cro/C1-type" evidence="3">
    <location>
        <begin position="198"/>
        <end position="253"/>
    </location>
</feature>
<feature type="domain" description="DOD-type homing endonuclease" evidence="4">
    <location>
        <begin position="278"/>
        <end position="413"/>
    </location>
</feature>
<feature type="domain" description="Glutamine amidotransferase type-2; second part" evidence="5">
    <location>
        <begin position="571"/>
        <end position="723"/>
    </location>
</feature>
<feature type="domain" description="SIS 1" evidence="6">
    <location>
        <begin position="786"/>
        <end position="923"/>
    </location>
</feature>
<feature type="domain" description="SIS 2" evidence="6">
    <location>
        <begin position="948"/>
        <end position="1089"/>
    </location>
</feature>
<feature type="active site" description="Nucleophile; for GATase activity" evidence="5">
    <location>
        <position position="2"/>
    </location>
</feature>
<feature type="active site" description="For Fru-6P isomerization activity" evidence="1">
    <location>
        <position position="1094"/>
    </location>
</feature>
<protein>
    <recommendedName>
        <fullName>Glutamine--fructose-6-phosphate aminotransferase [isomerizing]</fullName>
        <ecNumber>2.6.1.16</ecNumber>
    </recommendedName>
    <alternativeName>
        <fullName>D-fructose-6-phosphate amidotransferase</fullName>
    </alternativeName>
    <alternativeName>
        <fullName>GFAT</fullName>
    </alternativeName>
    <alternativeName>
        <fullName>Glucosamine-6-phosphate synthase</fullName>
    </alternativeName>
    <alternativeName>
        <fullName>Hexosephosphate aminotransferase</fullName>
    </alternativeName>
    <alternativeName>
        <fullName>L-glutamine--D-fructose-6-phosphate amidotransferase</fullName>
    </alternativeName>
    <component>
        <recommendedName>
            <fullName>Mja gf6p intein</fullName>
        </recommendedName>
    </component>
</protein>
<organism>
    <name type="scientific">Methanocaldococcus jannaschii (strain ATCC 43067 / DSM 2661 / JAL-1 / JCM 10045 / NBRC 100440)</name>
    <name type="common">Methanococcus jannaschii</name>
    <dbReference type="NCBI Taxonomy" id="243232"/>
    <lineage>
        <taxon>Archaea</taxon>
        <taxon>Methanobacteriati</taxon>
        <taxon>Methanobacteriota</taxon>
        <taxon>Methanomada group</taxon>
        <taxon>Methanococci</taxon>
        <taxon>Methanococcales</taxon>
        <taxon>Methanocaldococcaceae</taxon>
        <taxon>Methanocaldococcus</taxon>
    </lineage>
</organism>
<comment type="function">
    <text evidence="1">Catalyzes the first step in hexosamine metabolism, converting fructose-6P into glucosamine-6P using glutamine as a nitrogen source.</text>
</comment>
<comment type="catalytic activity">
    <reaction>
        <text>D-fructose 6-phosphate + L-glutamine = D-glucosamine 6-phosphate + L-glutamate</text>
        <dbReference type="Rhea" id="RHEA:13237"/>
        <dbReference type="ChEBI" id="CHEBI:29985"/>
        <dbReference type="ChEBI" id="CHEBI:58359"/>
        <dbReference type="ChEBI" id="CHEBI:58725"/>
        <dbReference type="ChEBI" id="CHEBI:61527"/>
        <dbReference type="EC" id="2.6.1.16"/>
    </reaction>
</comment>
<comment type="subunit">
    <text evidence="1">Homodimer.</text>
</comment>
<comment type="subcellular location">
    <subcellularLocation>
        <location evidence="1">Cytoplasm</location>
    </subcellularLocation>
</comment>
<comment type="PTM">
    <text evidence="7">This protein undergoes a protein self splicing that involves a post-translational excision of the intervening region (intein) followed by peptide ligation.</text>
</comment>
<comment type="similarity">
    <text evidence="7">In the C-terminal section; belongs to the SIS family. GFAT subfamily.</text>
</comment>
<comment type="sequence caution" evidence="7">
    <conflict type="erroneous initiation">
        <sequence resource="EMBL-CDS" id="AAB99430"/>
    </conflict>
</comment>
<reference key="1">
    <citation type="journal article" date="1996" name="Science">
        <title>Complete genome sequence of the methanogenic archaeon, Methanococcus jannaschii.</title>
        <authorList>
            <person name="Bult C.J."/>
            <person name="White O."/>
            <person name="Olsen G.J."/>
            <person name="Zhou L."/>
            <person name="Fleischmann R.D."/>
            <person name="Sutton G.G."/>
            <person name="Blake J.A."/>
            <person name="FitzGerald L.M."/>
            <person name="Clayton R.A."/>
            <person name="Gocayne J.D."/>
            <person name="Kerlavage A.R."/>
            <person name="Dougherty B.A."/>
            <person name="Tomb J.-F."/>
            <person name="Adams M.D."/>
            <person name="Reich C.I."/>
            <person name="Overbeek R."/>
            <person name="Kirkness E.F."/>
            <person name="Weinstock K.G."/>
            <person name="Merrick J.M."/>
            <person name="Glodek A."/>
            <person name="Scott J.L."/>
            <person name="Geoghagen N.S.M."/>
            <person name="Weidman J.F."/>
            <person name="Fuhrmann J.L."/>
            <person name="Nguyen D."/>
            <person name="Utterback T.R."/>
            <person name="Kelley J.M."/>
            <person name="Peterson J.D."/>
            <person name="Sadow P.W."/>
            <person name="Hanna M.C."/>
            <person name="Cotton M.D."/>
            <person name="Roberts K.M."/>
            <person name="Hurst M.A."/>
            <person name="Kaine B.P."/>
            <person name="Borodovsky M."/>
            <person name="Klenk H.-P."/>
            <person name="Fraser C.M."/>
            <person name="Smith H.O."/>
            <person name="Woese C.R."/>
            <person name="Venter J.C."/>
        </authorList>
    </citation>
    <scope>NUCLEOTIDE SEQUENCE [LARGE SCALE GENOMIC DNA]</scope>
    <source>
        <strain>ATCC 43067 / DSM 2661 / JAL-1 / JCM 10045 / NBRC 100440</strain>
    </source>
</reference>
<sequence>MCGIIGYIGNDKAPKILLNGLRRLEYRGYDSCGIGVVDNNKLIIKKNVGKVEEVAKKERFLDIDGNIGIGHCLHPDTYVILPDGRMKKISEIDEDEVLSVNFEDLKLYNKKIKKFKHKAPKILYKIKTAFSELITTGEHKLFVVENGKIVEKCVKDLNGSELIGVVRKLNYSFNDNVEFKDVYVERHYKLDETIRNKLRKVREKLGLTRKDVEKLCGVKEIYIVKIETGKLESIEEERLKKLCSLYGINFEEIIYRDNLHYTNPVKFPKTPTPELMQIIGYIIGDGHFPSNRMLRLKDERKEVLEEYNQLFKTVFNLEGNIKKGDGNYYILEINSKYLIDWFRENIPELFNKTGNERTPEFVFRLNNDLVASYLRGIFDAEGYIRAEAKQIGIGMTSKCFIKEIQFLLLRFGILASYSKIKRKEENWNNTHKLLISDKKSFELFKKYIGFTAKDKMEKLEAILNKMKGLNFRYISIPLTKKEIREFVGVPLKTIKNGDNYCTDYTIEKIIEELNSKGLYDKAEYLKRFLDADIVWTKFKIEEVESDVEYVYDLEVEDYHNFIGNLIINHNSRWATHGNVCKENAHPHTDCKEEIAVVHNGIISNYKELKDELMKKGHKFKSETDTEVVPHLIEEELKKFKEINEENYIKAVKNAIKKLKGTYALVIINKNFPNLLIGARNESPLILGINDDGYFLGSDITAFLDYTNKAIPLEDGDVVVIKKKENGYEVTIENNGNTVEREMMEINWDISSAEKMGYPHFMLKEIMEQPEVLKVSAKISAEEIKELAKCIKDYDRVYFVAMGTSLHAAMVVEYLFAKLGKLVIACDASEFLNKGVVDDKTLVIGITQSGETYDTLKALRFAKKNKAKTGAIVNVLGSTATREADITVMMGAGIEIAVCATKTYTSQLMILYRLFIEYGKLLGRDMSEYEKEIDKIPNYIKEVLDKKETIKEIANNLKVNNYIFISKGINIASALEGALKFKEITYLHAEGMSGGLLKHGTISLIDENMDTVAIVPPRDSAVFNSILSNIEEVKARGGKVIAITPTEIDGAENILVPEVIEEISPIVYAPAFQLLAYYKAVELGRDVDKPRGLAKSVTVE</sequence>
<gene>
    <name type="primary">glmS</name>
    <name type="ordered locus">MJ1420</name>
</gene>
<keyword id="KW-0032">Aminotransferase</keyword>
<keyword id="KW-0068">Autocatalytic cleavage</keyword>
<keyword id="KW-0963">Cytoplasm</keyword>
<keyword id="KW-0238">DNA-binding</keyword>
<keyword id="KW-0315">Glutamine amidotransferase</keyword>
<keyword id="KW-0651">Protein splicing</keyword>
<keyword id="KW-1185">Reference proteome</keyword>
<keyword id="KW-0677">Repeat</keyword>
<keyword id="KW-0808">Transferase</keyword>
<dbReference type="EC" id="2.6.1.16"/>
<dbReference type="EMBL" id="L77117">
    <property type="protein sequence ID" value="AAB99430.1"/>
    <property type="status" value="ALT_INIT"/>
    <property type="molecule type" value="Genomic_DNA"/>
</dbReference>
<dbReference type="PIR" id="C64477">
    <property type="entry name" value="C64477"/>
</dbReference>
<dbReference type="RefSeq" id="WP_083774552.1">
    <property type="nucleotide sequence ID" value="NC_000909.1"/>
</dbReference>
<dbReference type="SMR" id="Q58815"/>
<dbReference type="FunCoup" id="Q58815">
    <property type="interactions" value="66"/>
</dbReference>
<dbReference type="STRING" id="243232.MJ_1420"/>
<dbReference type="PaxDb" id="243232-MJ_1420"/>
<dbReference type="EnsemblBacteria" id="AAB99430">
    <property type="protein sequence ID" value="AAB99430"/>
    <property type="gene ID" value="MJ_1420"/>
</dbReference>
<dbReference type="GeneID" id="32160007"/>
<dbReference type="KEGG" id="mja:MJ_1420"/>
<dbReference type="eggNOG" id="arCOG00057">
    <property type="taxonomic scope" value="Archaea"/>
</dbReference>
<dbReference type="eggNOG" id="arCOG01863">
    <property type="taxonomic scope" value="Archaea"/>
</dbReference>
<dbReference type="eggNOG" id="arCOG03151">
    <property type="taxonomic scope" value="Archaea"/>
</dbReference>
<dbReference type="HOGENOM" id="CLU_285704_0_0_2"/>
<dbReference type="InParanoid" id="Q58815"/>
<dbReference type="OrthoDB" id="372195at2157"/>
<dbReference type="Proteomes" id="UP000000805">
    <property type="component" value="Chromosome"/>
</dbReference>
<dbReference type="GO" id="GO:0005737">
    <property type="term" value="C:cytoplasm"/>
    <property type="evidence" value="ECO:0007669"/>
    <property type="project" value="UniProtKB-SubCell"/>
</dbReference>
<dbReference type="GO" id="GO:0097367">
    <property type="term" value="F:carbohydrate derivative binding"/>
    <property type="evidence" value="ECO:0007669"/>
    <property type="project" value="InterPro"/>
</dbReference>
<dbReference type="GO" id="GO:0003677">
    <property type="term" value="F:DNA binding"/>
    <property type="evidence" value="ECO:0007669"/>
    <property type="project" value="UniProtKB-KW"/>
</dbReference>
<dbReference type="GO" id="GO:0004519">
    <property type="term" value="F:endonuclease activity"/>
    <property type="evidence" value="ECO:0007669"/>
    <property type="project" value="InterPro"/>
</dbReference>
<dbReference type="GO" id="GO:0004360">
    <property type="term" value="F:glutamine-fructose-6-phosphate transaminase (isomerizing) activity"/>
    <property type="evidence" value="ECO:0000318"/>
    <property type="project" value="GO_Central"/>
</dbReference>
<dbReference type="GO" id="GO:0006002">
    <property type="term" value="P:fructose 6-phosphate metabolic process"/>
    <property type="evidence" value="ECO:0000318"/>
    <property type="project" value="GO_Central"/>
</dbReference>
<dbReference type="GO" id="GO:0016539">
    <property type="term" value="P:intein-mediated protein splicing"/>
    <property type="evidence" value="ECO:0007669"/>
    <property type="project" value="InterPro"/>
</dbReference>
<dbReference type="GO" id="GO:0006487">
    <property type="term" value="P:protein N-linked glycosylation"/>
    <property type="evidence" value="ECO:0000318"/>
    <property type="project" value="GO_Central"/>
</dbReference>
<dbReference type="GO" id="GO:0006047">
    <property type="term" value="P:UDP-N-acetylglucosamine metabolic process"/>
    <property type="evidence" value="ECO:0000318"/>
    <property type="project" value="GO_Central"/>
</dbReference>
<dbReference type="CDD" id="cd00714">
    <property type="entry name" value="GFAT"/>
    <property type="match status" value="1"/>
</dbReference>
<dbReference type="CDD" id="cd00081">
    <property type="entry name" value="Hint"/>
    <property type="match status" value="2"/>
</dbReference>
<dbReference type="CDD" id="cd00093">
    <property type="entry name" value="HTH_XRE"/>
    <property type="match status" value="1"/>
</dbReference>
<dbReference type="CDD" id="cd05008">
    <property type="entry name" value="SIS_GlmS_GlmD_1"/>
    <property type="match status" value="1"/>
</dbReference>
<dbReference type="CDD" id="cd05009">
    <property type="entry name" value="SIS_GlmS_GlmD_2"/>
    <property type="match status" value="1"/>
</dbReference>
<dbReference type="FunFam" id="3.10.28.10:FF:000019">
    <property type="entry name" value="Vitamin B12-dependent ribonucleotide reductase"/>
    <property type="match status" value="1"/>
</dbReference>
<dbReference type="Gene3D" id="3.40.50.10490">
    <property type="entry name" value="Glucose-6-phosphate isomerase like protein, domain 1"/>
    <property type="match status" value="2"/>
</dbReference>
<dbReference type="Gene3D" id="3.60.20.10">
    <property type="entry name" value="Glutamine Phosphoribosylpyrophosphate, subunit 1, domain 1"/>
    <property type="match status" value="2"/>
</dbReference>
<dbReference type="Gene3D" id="2.170.16.10">
    <property type="entry name" value="Hedgehog/Intein (Hint) domain"/>
    <property type="match status" value="1"/>
</dbReference>
<dbReference type="Gene3D" id="3.10.28.10">
    <property type="entry name" value="Homing endonucleases"/>
    <property type="match status" value="1"/>
</dbReference>
<dbReference type="Gene3D" id="1.10.260.40">
    <property type="entry name" value="lambda repressor-like DNA-binding domains"/>
    <property type="match status" value="1"/>
</dbReference>
<dbReference type="InterPro" id="IPR001387">
    <property type="entry name" value="Cro/C1-type_HTH"/>
</dbReference>
<dbReference type="InterPro" id="IPR017932">
    <property type="entry name" value="GATase_2_dom"/>
</dbReference>
<dbReference type="InterPro" id="IPR005855">
    <property type="entry name" value="GFAT"/>
</dbReference>
<dbReference type="InterPro" id="IPR047084">
    <property type="entry name" value="GFAT_N"/>
</dbReference>
<dbReference type="InterPro" id="IPR035466">
    <property type="entry name" value="GlmS/AgaS_SIS"/>
</dbReference>
<dbReference type="InterPro" id="IPR035490">
    <property type="entry name" value="GlmS/FrlB_SIS"/>
</dbReference>
<dbReference type="InterPro" id="IPR003586">
    <property type="entry name" value="Hint_dom_C"/>
</dbReference>
<dbReference type="InterPro" id="IPR003587">
    <property type="entry name" value="Hint_dom_N"/>
</dbReference>
<dbReference type="InterPro" id="IPR036844">
    <property type="entry name" value="Hint_dom_sf"/>
</dbReference>
<dbReference type="InterPro" id="IPR027434">
    <property type="entry name" value="Homing_endonucl"/>
</dbReference>
<dbReference type="InterPro" id="IPR006142">
    <property type="entry name" value="INTEIN"/>
</dbReference>
<dbReference type="InterPro" id="IPR030934">
    <property type="entry name" value="Intein_C"/>
</dbReference>
<dbReference type="InterPro" id="IPR004042">
    <property type="entry name" value="Intein_endonuc_central"/>
</dbReference>
<dbReference type="InterPro" id="IPR006141">
    <property type="entry name" value="Intein_N"/>
</dbReference>
<dbReference type="InterPro" id="IPR004860">
    <property type="entry name" value="LAGLIDADG_dom"/>
</dbReference>
<dbReference type="InterPro" id="IPR010982">
    <property type="entry name" value="Lambda_DNA-bd_dom_sf"/>
</dbReference>
<dbReference type="InterPro" id="IPR029055">
    <property type="entry name" value="Ntn_hydrolases_N"/>
</dbReference>
<dbReference type="InterPro" id="IPR001347">
    <property type="entry name" value="SIS_dom"/>
</dbReference>
<dbReference type="InterPro" id="IPR046348">
    <property type="entry name" value="SIS_dom_sf"/>
</dbReference>
<dbReference type="NCBIfam" id="TIGR01135">
    <property type="entry name" value="glmS"/>
    <property type="match status" value="1"/>
</dbReference>
<dbReference type="NCBIfam" id="TIGR01443">
    <property type="entry name" value="intein_Cterm"/>
    <property type="match status" value="1"/>
</dbReference>
<dbReference type="NCBIfam" id="TIGR01445">
    <property type="entry name" value="intein_Nterm"/>
    <property type="match status" value="1"/>
</dbReference>
<dbReference type="NCBIfam" id="NF001484">
    <property type="entry name" value="PRK00331.1"/>
    <property type="match status" value="1"/>
</dbReference>
<dbReference type="PANTHER" id="PTHR10937">
    <property type="entry name" value="GLUCOSAMINE--FRUCTOSE-6-PHOSPHATE AMINOTRANSFERASE, ISOMERIZING"/>
    <property type="match status" value="1"/>
</dbReference>
<dbReference type="PANTHER" id="PTHR10937:SF0">
    <property type="entry name" value="GLUTAMINE--FRUCTOSE-6-PHOSPHATE TRANSAMINASE (ISOMERIZING)"/>
    <property type="match status" value="1"/>
</dbReference>
<dbReference type="Pfam" id="PF13537">
    <property type="entry name" value="GATase_7"/>
    <property type="match status" value="1"/>
</dbReference>
<dbReference type="Pfam" id="PF01381">
    <property type="entry name" value="HTH_3"/>
    <property type="match status" value="1"/>
</dbReference>
<dbReference type="Pfam" id="PF14890">
    <property type="entry name" value="Intein_splicing"/>
    <property type="match status" value="1"/>
</dbReference>
<dbReference type="Pfam" id="PF14528">
    <property type="entry name" value="LAGLIDADG_3"/>
    <property type="match status" value="2"/>
</dbReference>
<dbReference type="Pfam" id="PF01380">
    <property type="entry name" value="SIS"/>
    <property type="match status" value="2"/>
</dbReference>
<dbReference type="PRINTS" id="PR00379">
    <property type="entry name" value="INTEIN"/>
</dbReference>
<dbReference type="SMART" id="SM00305">
    <property type="entry name" value="HintC"/>
    <property type="match status" value="1"/>
</dbReference>
<dbReference type="SMART" id="SM00306">
    <property type="entry name" value="HintN"/>
    <property type="match status" value="1"/>
</dbReference>
<dbReference type="SMART" id="SM00530">
    <property type="entry name" value="HTH_XRE"/>
    <property type="match status" value="1"/>
</dbReference>
<dbReference type="SUPFAM" id="SSF51294">
    <property type="entry name" value="Hedgehog/intein (Hint) domain"/>
    <property type="match status" value="1"/>
</dbReference>
<dbReference type="SUPFAM" id="SSF55608">
    <property type="entry name" value="Homing endonucleases"/>
    <property type="match status" value="1"/>
</dbReference>
<dbReference type="SUPFAM" id="SSF47413">
    <property type="entry name" value="lambda repressor-like DNA-binding domains"/>
    <property type="match status" value="1"/>
</dbReference>
<dbReference type="SUPFAM" id="SSF56235">
    <property type="entry name" value="N-terminal nucleophile aminohydrolases (Ntn hydrolases)"/>
    <property type="match status" value="2"/>
</dbReference>
<dbReference type="SUPFAM" id="SSF53697">
    <property type="entry name" value="SIS domain"/>
    <property type="match status" value="1"/>
</dbReference>
<dbReference type="PROSITE" id="PS51278">
    <property type="entry name" value="GATASE_TYPE_2"/>
    <property type="match status" value="1"/>
</dbReference>
<dbReference type="PROSITE" id="PS50943">
    <property type="entry name" value="HTH_CROC1"/>
    <property type="match status" value="1"/>
</dbReference>
<dbReference type="PROSITE" id="PS50818">
    <property type="entry name" value="INTEIN_C_TER"/>
    <property type="match status" value="1"/>
</dbReference>
<dbReference type="PROSITE" id="PS50819">
    <property type="entry name" value="INTEIN_ENDONUCLEASE"/>
    <property type="match status" value="1"/>
</dbReference>
<dbReference type="PROSITE" id="PS50817">
    <property type="entry name" value="INTEIN_N_TER"/>
    <property type="match status" value="1"/>
</dbReference>
<dbReference type="PROSITE" id="PS51464">
    <property type="entry name" value="SIS"/>
    <property type="match status" value="2"/>
</dbReference>